<protein>
    <recommendedName>
        <fullName>3-deoxy-D-manno-octulosonic acid transferase</fullName>
        <shortName>Kdo transferase</shortName>
        <ecNumber>2.4.99.12</ecNumber>
        <ecNumber>2.4.99.13</ecNumber>
        <ecNumber>2.4.99.14</ecNumber>
    </recommendedName>
    <alternativeName>
        <fullName>Kdo(2)-lipid IV(A) 3-deoxy-D-manno-octulosonic acid transferase</fullName>
    </alternativeName>
    <alternativeName>
        <fullName>Kdo-lipid IV(A) 3-deoxy-D-manno-octulosonic acid transferase</fullName>
    </alternativeName>
    <alternativeName>
        <fullName>Lipid IV(A) 3-deoxy-D-manno-octulosonic acid transferase</fullName>
    </alternativeName>
    <alternativeName>
        <fullName>Trifunctional Kdo transferase</fullName>
    </alternativeName>
</protein>
<comment type="function">
    <text evidence="2">Involved in lipopolysaccharide (LPS) biosynthesis. Catalyzes the transfer of three 3-deoxy-D-manno-octulosonate (Kdo) residues from CMP-Kdo to lipid IV(A), the tetraacyldisaccharide-1,4'-bisphosphate precursor of lipid A. Thus generates the genus-specific LPS epitope of Chlamydia, composed of the trisaccharide alpha-Kdo-(2-&gt;8)-alpha-Kdo-(2-&gt;4)-alpha-Kdo.</text>
</comment>
<comment type="catalytic activity">
    <reaction>
        <text>lipid IVA (E. coli) + CMP-3-deoxy-beta-D-manno-octulosonate = alpha-Kdo-(2-&gt;6)-lipid IVA (E. coli) + CMP + H(+)</text>
        <dbReference type="Rhea" id="RHEA:28066"/>
        <dbReference type="ChEBI" id="CHEBI:15378"/>
        <dbReference type="ChEBI" id="CHEBI:58603"/>
        <dbReference type="ChEBI" id="CHEBI:60364"/>
        <dbReference type="ChEBI" id="CHEBI:60377"/>
        <dbReference type="ChEBI" id="CHEBI:85987"/>
        <dbReference type="EC" id="2.4.99.12"/>
    </reaction>
</comment>
<comment type="catalytic activity">
    <reaction>
        <text>alpha-Kdo-(2-&gt;6)-lipid IVA (E. coli) + CMP-3-deoxy-beta-D-manno-octulosonate = alpha-Kdo-(2-&gt;4)-alpha-Kdo-(2-&gt;6)-lipid IVA (E. coli) + CMP + H(+)</text>
        <dbReference type="Rhea" id="RHEA:28062"/>
        <dbReference type="ChEBI" id="CHEBI:15378"/>
        <dbReference type="ChEBI" id="CHEBI:60364"/>
        <dbReference type="ChEBI" id="CHEBI:60365"/>
        <dbReference type="ChEBI" id="CHEBI:60377"/>
        <dbReference type="ChEBI" id="CHEBI:85987"/>
        <dbReference type="EC" id="2.4.99.13"/>
    </reaction>
</comment>
<comment type="catalytic activity">
    <reaction>
        <text>alpha-Kdo-(2-&gt;4)-alpha-Kdo-(2-&gt;6)-lipid IVA (E. coli) + CMP-3-deoxy-beta-D-manno-octulosonate = alpha-Kdo-(2-&gt;8)-alpha-Kdo-(2-&gt;4)-alpha-Kdo-(2-&gt;6)-lipid IVA (E. coli) + CMP + H(+)</text>
        <dbReference type="Rhea" id="RHEA:28154"/>
        <dbReference type="ChEBI" id="CHEBI:15378"/>
        <dbReference type="ChEBI" id="CHEBI:60365"/>
        <dbReference type="ChEBI" id="CHEBI:60377"/>
        <dbReference type="ChEBI" id="CHEBI:85987"/>
        <dbReference type="ChEBI" id="CHEBI:86234"/>
        <dbReference type="EC" id="2.4.99.14"/>
    </reaction>
</comment>
<comment type="pathway">
    <text>Bacterial outer membrane biogenesis; LPS core biosynthesis.</text>
</comment>
<comment type="subcellular location">
    <subcellularLocation>
        <location evidence="1">Cell inner membrane</location>
        <topology evidence="1">Single-pass membrane protein</topology>
        <orientation evidence="1">Cytoplasmic side</orientation>
    </subcellularLocation>
</comment>
<comment type="similarity">
    <text evidence="4">Belongs to the glycosyltransferase group 1 family. Glycosyltransferase 30 subfamily.</text>
</comment>
<feature type="chain" id="PRO_0000080284" description="3-deoxy-D-manno-octulosonic acid transferase">
    <location>
        <begin position="1"/>
        <end position="431"/>
    </location>
</feature>
<feature type="transmembrane region" description="Helical; Signal-anchor" evidence="3">
    <location>
        <begin position="5"/>
        <end position="27"/>
    </location>
</feature>
<feature type="active site" description="Proton acceptor" evidence="1">
    <location>
        <position position="67"/>
    </location>
</feature>
<feature type="binding site" evidence="1">
    <location>
        <begin position="275"/>
        <end position="276"/>
    </location>
    <ligand>
        <name>CMP</name>
        <dbReference type="ChEBI" id="CHEBI:60377"/>
    </ligand>
</feature>
<feature type="binding site" evidence="1">
    <location>
        <begin position="315"/>
        <end position="317"/>
    </location>
    <ligand>
        <name>CMP</name>
        <dbReference type="ChEBI" id="CHEBI:60377"/>
    </ligand>
</feature>
<feature type="binding site" evidence="1">
    <location>
        <begin position="342"/>
        <end position="345"/>
    </location>
    <ligand>
        <name>CMP</name>
        <dbReference type="ChEBI" id="CHEBI:60377"/>
    </ligand>
</feature>
<feature type="site" description="Transition state stabilizer" evidence="1">
    <location>
        <position position="138"/>
    </location>
</feature>
<feature type="site" description="Transition state stabilizer" evidence="1">
    <location>
        <position position="216"/>
    </location>
</feature>
<feature type="sequence variant" description="In strain: Tw-5/OT and APa-2.">
    <original>M</original>
    <variation>V</variation>
    <location>
        <position position="249"/>
    </location>
</feature>
<feature type="sequence variant" description="In strain: BOUR.">
    <original>I</original>
    <variation>V</variation>
    <location>
        <position position="321"/>
    </location>
</feature>
<keyword id="KW-0997">Cell inner membrane</keyword>
<keyword id="KW-1003">Cell membrane</keyword>
<keyword id="KW-0448">Lipopolysaccharide biosynthesis</keyword>
<keyword id="KW-0472">Membrane</keyword>
<keyword id="KW-1185">Reference proteome</keyword>
<keyword id="KW-0735">Signal-anchor</keyword>
<keyword id="KW-0808">Transferase</keyword>
<keyword id="KW-0812">Transmembrane</keyword>
<keyword id="KW-1133">Transmembrane helix</keyword>
<name>KDTA_CHLTR</name>
<sequence length="431" mass="49497">MIRRWLTSRLYDAFLVCAFFVSAPRIFYKVFFHGKYIDSWKIRFGVQKPFVKGEGPLVWFHGASVGEVSLLAPLLNRWREEFPEWRFVVTTCSEAGVHTARRLYESLGATVFVLPLDLSCIIKSVVRKLAPDIVIFSEGDCWLHFLTESKRLGAKAFLINGKLSEHSCKRFSFLKRLGRNYFAPLDLLILQDELYKQRFMQIGISSDKIHVTGNMKTFIESSLATNRRDFWRAKLQISSQDRLIVLGSMHPKDVEVWAEVVSHFHNSSTKILWVPRHLEKLKEHAKLLEKAGILFGLWSQGASFRQYNSLIMDAMGVLKDIYSAADIAFVGGTFDPSVGGHNLLEPLQKEVPLMFGPYIYSQSVLAEKLREKEAGLSVNKETLLDVVTDLLQNEKNRQAYIEKGKSFLKQEENSFQQTWEILKSQITCMKI</sequence>
<organism>
    <name type="scientific">Chlamydia trachomatis serovar D (strain ATCC VR-885 / DSM 19411 / UW-3/Cx)</name>
    <dbReference type="NCBI Taxonomy" id="272561"/>
    <lineage>
        <taxon>Bacteria</taxon>
        <taxon>Pseudomonadati</taxon>
        <taxon>Chlamydiota</taxon>
        <taxon>Chlamydiia</taxon>
        <taxon>Chlamydiales</taxon>
        <taxon>Chlamydiaceae</taxon>
        <taxon>Chlamydia/Chlamydophila group</taxon>
        <taxon>Chlamydia</taxon>
    </lineage>
</organism>
<proteinExistence type="inferred from homology"/>
<accession>P0CE14</accession>
<accession>P0C0Z9</accession>
<accession>Q46394</accession>
<accession>Q46395</accession>
<accession>Q46396</accession>
<accession>Q46401</accession>
<accession>Q57440</accession>
<gene>
    <name type="primary">waaA</name>
    <name type="synonym">gseA</name>
    <name type="synonym">kdtA</name>
    <name type="ordered locus">CT_208</name>
</gene>
<evidence type="ECO:0000250" key="1"/>
<evidence type="ECO:0000250" key="2">
    <source>
        <dbReference type="UniProtKB" id="Q46222"/>
    </source>
</evidence>
<evidence type="ECO:0000255" key="3"/>
<evidence type="ECO:0000305" key="4"/>
<dbReference type="EC" id="2.4.99.12"/>
<dbReference type="EC" id="2.4.99.13"/>
<dbReference type="EC" id="2.4.99.14"/>
<dbReference type="EMBL" id="Z22653">
    <property type="protein sequence ID" value="CAA80368.1"/>
    <property type="molecule type" value="Genomic_DNA"/>
</dbReference>
<dbReference type="EMBL" id="Z22654">
    <property type="protein sequence ID" value="CAA80369.1"/>
    <property type="molecule type" value="Genomic_DNA"/>
</dbReference>
<dbReference type="EMBL" id="Z22655">
    <property type="protein sequence ID" value="CAA80370.1"/>
    <property type="molecule type" value="Genomic_DNA"/>
</dbReference>
<dbReference type="EMBL" id="Z22656">
    <property type="protein sequence ID" value="CAA80371.1"/>
    <property type="molecule type" value="Genomic_DNA"/>
</dbReference>
<dbReference type="EMBL" id="AE001273">
    <property type="protein sequence ID" value="AAC67800.1"/>
    <property type="molecule type" value="Genomic_DNA"/>
</dbReference>
<dbReference type="PIR" id="I40894">
    <property type="entry name" value="I40894"/>
</dbReference>
<dbReference type="PIR" id="I40897">
    <property type="entry name" value="I40897"/>
</dbReference>
<dbReference type="PIR" id="I40898">
    <property type="entry name" value="I40898"/>
</dbReference>
<dbReference type="PIR" id="S41168">
    <property type="entry name" value="S41168"/>
</dbReference>
<dbReference type="RefSeq" id="NP_219712.1">
    <property type="nucleotide sequence ID" value="NC_000117.1"/>
</dbReference>
<dbReference type="RefSeq" id="WP_009871554.1">
    <property type="nucleotide sequence ID" value="NC_000117.1"/>
</dbReference>
<dbReference type="SMR" id="P0CE14"/>
<dbReference type="STRING" id="272561.CT_208"/>
<dbReference type="CAZy" id="GT30">
    <property type="family name" value="Glycosyltransferase Family 30"/>
</dbReference>
<dbReference type="EnsemblBacteria" id="AAC67800">
    <property type="protein sequence ID" value="AAC67800"/>
    <property type="gene ID" value="CT_208"/>
</dbReference>
<dbReference type="GeneID" id="884918"/>
<dbReference type="KEGG" id="ctr:CT_208"/>
<dbReference type="PATRIC" id="fig|272561.5.peg.223"/>
<dbReference type="HOGENOM" id="CLU_036146_2_0_0"/>
<dbReference type="InParanoid" id="P0CE14"/>
<dbReference type="OrthoDB" id="9789797at2"/>
<dbReference type="UniPathway" id="UPA00958"/>
<dbReference type="Proteomes" id="UP000000431">
    <property type="component" value="Chromosome"/>
</dbReference>
<dbReference type="GO" id="GO:0005886">
    <property type="term" value="C:plasma membrane"/>
    <property type="evidence" value="ECO:0000318"/>
    <property type="project" value="GO_Central"/>
</dbReference>
<dbReference type="GO" id="GO:0043842">
    <property type="term" value="F:Kdo transferase activity"/>
    <property type="evidence" value="ECO:0007669"/>
    <property type="project" value="UniProtKB-EC"/>
</dbReference>
<dbReference type="GO" id="GO:0016740">
    <property type="term" value="F:transferase activity"/>
    <property type="evidence" value="ECO:0000318"/>
    <property type="project" value="GO_Central"/>
</dbReference>
<dbReference type="GO" id="GO:0009245">
    <property type="term" value="P:lipid A biosynthetic process"/>
    <property type="evidence" value="ECO:0000318"/>
    <property type="project" value="GO_Central"/>
</dbReference>
<dbReference type="GO" id="GO:0009244">
    <property type="term" value="P:lipopolysaccharide core region biosynthetic process"/>
    <property type="evidence" value="ECO:0007669"/>
    <property type="project" value="UniProtKB-UniPathway"/>
</dbReference>
<dbReference type="Gene3D" id="3.40.50.11720">
    <property type="entry name" value="3-Deoxy-D-manno-octulosonic-acid transferase, N-terminal domain"/>
    <property type="match status" value="1"/>
</dbReference>
<dbReference type="Gene3D" id="3.40.50.2000">
    <property type="entry name" value="Glycogen Phosphorylase B"/>
    <property type="match status" value="1"/>
</dbReference>
<dbReference type="InterPro" id="IPR007507">
    <property type="entry name" value="Glycos_transf_N"/>
</dbReference>
<dbReference type="InterPro" id="IPR038107">
    <property type="entry name" value="Glycos_transf_N_sf"/>
</dbReference>
<dbReference type="InterPro" id="IPR039901">
    <property type="entry name" value="Kdotransferase"/>
</dbReference>
<dbReference type="NCBIfam" id="NF004389">
    <property type="entry name" value="PRK05749.1-5"/>
    <property type="match status" value="1"/>
</dbReference>
<dbReference type="PANTHER" id="PTHR42755:SF1">
    <property type="entry name" value="3-DEOXY-D-MANNO-OCTULOSONIC ACID TRANSFERASE, MITOCHONDRIAL-RELATED"/>
    <property type="match status" value="1"/>
</dbReference>
<dbReference type="PANTHER" id="PTHR42755">
    <property type="entry name" value="3-DEOXY-MANNO-OCTULOSONATE CYTIDYLYLTRANSFERASE"/>
    <property type="match status" value="1"/>
</dbReference>
<dbReference type="Pfam" id="PF04413">
    <property type="entry name" value="Glycos_transf_N"/>
    <property type="match status" value="1"/>
</dbReference>
<dbReference type="SUPFAM" id="SSF53756">
    <property type="entry name" value="UDP-Glycosyltransferase/glycogen phosphorylase"/>
    <property type="match status" value="1"/>
</dbReference>
<reference key="1">
    <citation type="journal article" date="1994" name="Microb. Pathog.">
        <title>Nucleotide sequence variations within the lipopolysaccharide biosynthesis gene gseA (Kdo transferase) among the Chlamydia trachomatis serovars.</title>
        <authorList>
            <person name="Mamat U."/>
            <person name="Loebau S."/>
            <person name="Persson K."/>
            <person name="Brade H."/>
        </authorList>
    </citation>
    <scope>NUCLEOTIDE SEQUENCE [GENOMIC DNA]</scope>
    <source>
        <strain>ATCC VR-885 / DSM 19411 / UW-3/Cx</strain>
        <strain>B/Tw-5/OT</strain>
        <strain>Ba/Apache-2</strain>
        <strain>BOUR</strain>
    </source>
</reference>
<reference key="2">
    <citation type="journal article" date="1998" name="Science">
        <title>Genome sequence of an obligate intracellular pathogen of humans: Chlamydia trachomatis.</title>
        <authorList>
            <person name="Stephens R.S."/>
            <person name="Kalman S."/>
            <person name="Lammel C.J."/>
            <person name="Fan J."/>
            <person name="Marathe R."/>
            <person name="Aravind L."/>
            <person name="Mitchell W.P."/>
            <person name="Olinger L."/>
            <person name="Tatusov R.L."/>
            <person name="Zhao Q."/>
            <person name="Koonin E.V."/>
            <person name="Davis R.W."/>
        </authorList>
    </citation>
    <scope>NUCLEOTIDE SEQUENCE [LARGE SCALE GENOMIC DNA]</scope>
    <source>
        <strain>ATCC VR-885 / DSM 19411 / UW-3/Cx</strain>
    </source>
</reference>